<protein>
    <recommendedName>
        <fullName evidence="1">Eukaryotic translation initiation factor 3 subunit M</fullName>
        <shortName evidence="1">eIF3m</shortName>
    </recommendedName>
</protein>
<reference key="1">
    <citation type="journal article" date="2005" name="Nature">
        <title>Sequencing of Aspergillus nidulans and comparative analysis with A. fumigatus and A. oryzae.</title>
        <authorList>
            <person name="Galagan J.E."/>
            <person name="Calvo S.E."/>
            <person name="Cuomo C."/>
            <person name="Ma L.-J."/>
            <person name="Wortman J.R."/>
            <person name="Batzoglou S."/>
            <person name="Lee S.-I."/>
            <person name="Bastuerkmen M."/>
            <person name="Spevak C.C."/>
            <person name="Clutterbuck J."/>
            <person name="Kapitonov V."/>
            <person name="Jurka J."/>
            <person name="Scazzocchio C."/>
            <person name="Farman M.L."/>
            <person name="Butler J."/>
            <person name="Purcell S."/>
            <person name="Harris S."/>
            <person name="Braus G.H."/>
            <person name="Draht O."/>
            <person name="Busch S."/>
            <person name="D'Enfert C."/>
            <person name="Bouchier C."/>
            <person name="Goldman G.H."/>
            <person name="Bell-Pedersen D."/>
            <person name="Griffiths-Jones S."/>
            <person name="Doonan J.H."/>
            <person name="Yu J."/>
            <person name="Vienken K."/>
            <person name="Pain A."/>
            <person name="Freitag M."/>
            <person name="Selker E.U."/>
            <person name="Archer D.B."/>
            <person name="Penalva M.A."/>
            <person name="Oakley B.R."/>
            <person name="Momany M."/>
            <person name="Tanaka T."/>
            <person name="Kumagai T."/>
            <person name="Asai K."/>
            <person name="Machida M."/>
            <person name="Nierman W.C."/>
            <person name="Denning D.W."/>
            <person name="Caddick M.X."/>
            <person name="Hynes M."/>
            <person name="Paoletti M."/>
            <person name="Fischer R."/>
            <person name="Miller B.L."/>
            <person name="Dyer P.S."/>
            <person name="Sachs M.S."/>
            <person name="Osmani S.A."/>
            <person name="Birren B.W."/>
        </authorList>
    </citation>
    <scope>NUCLEOTIDE SEQUENCE [LARGE SCALE GENOMIC DNA]</scope>
    <source>
        <strain>FGSC A4 / ATCC 38163 / CBS 112.46 / NRRL 194 / M139</strain>
    </source>
</reference>
<reference key="2">
    <citation type="journal article" date="2009" name="Fungal Genet. Biol.">
        <title>The 2008 update of the Aspergillus nidulans genome annotation: a community effort.</title>
        <authorList>
            <person name="Wortman J.R."/>
            <person name="Gilsenan J.M."/>
            <person name="Joardar V."/>
            <person name="Deegan J."/>
            <person name="Clutterbuck J."/>
            <person name="Andersen M.R."/>
            <person name="Archer D."/>
            <person name="Bencina M."/>
            <person name="Braus G."/>
            <person name="Coutinho P."/>
            <person name="von Dohren H."/>
            <person name="Doonan J."/>
            <person name="Driessen A.J."/>
            <person name="Durek P."/>
            <person name="Espeso E."/>
            <person name="Fekete E."/>
            <person name="Flipphi M."/>
            <person name="Estrada C.G."/>
            <person name="Geysens S."/>
            <person name="Goldman G."/>
            <person name="de Groot P.W."/>
            <person name="Hansen K."/>
            <person name="Harris S.D."/>
            <person name="Heinekamp T."/>
            <person name="Helmstaedt K."/>
            <person name="Henrissat B."/>
            <person name="Hofmann G."/>
            <person name="Homan T."/>
            <person name="Horio T."/>
            <person name="Horiuchi H."/>
            <person name="James S."/>
            <person name="Jones M."/>
            <person name="Karaffa L."/>
            <person name="Karanyi Z."/>
            <person name="Kato M."/>
            <person name="Keller N."/>
            <person name="Kelly D.E."/>
            <person name="Kiel J.A."/>
            <person name="Kim J.M."/>
            <person name="van der Klei I.J."/>
            <person name="Klis F.M."/>
            <person name="Kovalchuk A."/>
            <person name="Krasevec N."/>
            <person name="Kubicek C.P."/>
            <person name="Liu B."/>
            <person name="Maccabe A."/>
            <person name="Meyer V."/>
            <person name="Mirabito P."/>
            <person name="Miskei M."/>
            <person name="Mos M."/>
            <person name="Mullins J."/>
            <person name="Nelson D.R."/>
            <person name="Nielsen J."/>
            <person name="Oakley B.R."/>
            <person name="Osmani S.A."/>
            <person name="Pakula T."/>
            <person name="Paszewski A."/>
            <person name="Paulsen I."/>
            <person name="Pilsyk S."/>
            <person name="Pocsi I."/>
            <person name="Punt P.J."/>
            <person name="Ram A.F."/>
            <person name="Ren Q."/>
            <person name="Robellet X."/>
            <person name="Robson G."/>
            <person name="Seiboth B."/>
            <person name="van Solingen P."/>
            <person name="Specht T."/>
            <person name="Sun J."/>
            <person name="Taheri-Talesh N."/>
            <person name="Takeshita N."/>
            <person name="Ussery D."/>
            <person name="vanKuyk P.A."/>
            <person name="Visser H."/>
            <person name="van de Vondervoort P.J."/>
            <person name="de Vries R.P."/>
            <person name="Walton J."/>
            <person name="Xiang X."/>
            <person name="Xiong Y."/>
            <person name="Zeng A.P."/>
            <person name="Brandt B.W."/>
            <person name="Cornell M.J."/>
            <person name="van den Hondel C.A."/>
            <person name="Visser J."/>
            <person name="Oliver S.G."/>
            <person name="Turner G."/>
        </authorList>
    </citation>
    <scope>GENOME REANNOTATION</scope>
    <source>
        <strain>FGSC A4 / ATCC 38163 / CBS 112.46 / NRRL 194 / M139</strain>
    </source>
</reference>
<gene>
    <name type="ORF">AN4259</name>
</gene>
<sequence length="459" mass="49846">MPAPSTTLLIEGSFSELAEEFAAYLDALNKPDDTTVQTEVAPLLQPLREQEQNDTQLDQSKRDEVLKKLVSAATVLNTAPEKEITPAYNLLIHLVQQASDPDMFLSRICSYLAKPIPSSPQFGASLSIAILSTIFNTLAPTDSSRFHVLLAIVTVIRQSGSSAAFDALKPQLTAQLPNWRSTWELDDEEARRLHLAIADAAQAAGDLDWAQTHVVDALQTIPPAEASSPAARDLAVRALTSALTHPAVFDFTPLTAADAVQALRSSDAPLFELLEIFTADTLDAYEDFISATPVENILPDNALAPHAEALQTKIRLLTLASLAAAATTTTGPSARSLSYETIASALRVPQEEVEKWVIDTIRAGLVEGKLSQLRSEFLVHRATYRVFGEKQWAEVQGRLMVWRRSLENVLGVIRSERERFVREAAAAAAAAAAEGEKGDKNNKGPSERRRAPQEIAAAE</sequence>
<keyword id="KW-0963">Cytoplasm</keyword>
<keyword id="KW-0396">Initiation factor</keyword>
<keyword id="KW-0648">Protein biosynthesis</keyword>
<keyword id="KW-1185">Reference proteome</keyword>
<name>EIF3M_EMENI</name>
<accession>Q5B5C1</accession>
<accession>C8V418</accession>
<comment type="function">
    <text evidence="1">Component of the eukaryotic translation initiation factor 3 (eIF-3) complex, which is involved in protein synthesis of a specialized repertoire of mRNAs and, together with other initiation factors, stimulates binding of mRNA and methionyl-tRNAi to the 40S ribosome. The eIF-3 complex specifically targets and initiates translation of a subset of mRNAs involved in cell proliferation.</text>
</comment>
<comment type="subunit">
    <text evidence="1">Component of the eukaryotic translation initiation factor 3 (eIF-3) complex.</text>
</comment>
<comment type="subcellular location">
    <subcellularLocation>
        <location evidence="1">Cytoplasm</location>
    </subcellularLocation>
</comment>
<comment type="similarity">
    <text evidence="1">Belongs to the eIF-3 subunit M family.</text>
</comment>
<organism>
    <name type="scientific">Emericella nidulans (strain FGSC A4 / ATCC 38163 / CBS 112.46 / NRRL 194 / M139)</name>
    <name type="common">Aspergillus nidulans</name>
    <dbReference type="NCBI Taxonomy" id="227321"/>
    <lineage>
        <taxon>Eukaryota</taxon>
        <taxon>Fungi</taxon>
        <taxon>Dikarya</taxon>
        <taxon>Ascomycota</taxon>
        <taxon>Pezizomycotina</taxon>
        <taxon>Eurotiomycetes</taxon>
        <taxon>Eurotiomycetidae</taxon>
        <taxon>Eurotiales</taxon>
        <taxon>Aspergillaceae</taxon>
        <taxon>Aspergillus</taxon>
        <taxon>Aspergillus subgen. Nidulantes</taxon>
    </lineage>
</organism>
<proteinExistence type="inferred from homology"/>
<dbReference type="EMBL" id="AACD01000069">
    <property type="protein sequence ID" value="EAA58927.1"/>
    <property type="molecule type" value="Genomic_DNA"/>
</dbReference>
<dbReference type="EMBL" id="BN001302">
    <property type="protein sequence ID" value="CBF74373.1"/>
    <property type="molecule type" value="Genomic_DNA"/>
</dbReference>
<dbReference type="RefSeq" id="XP_661863.1">
    <property type="nucleotide sequence ID" value="XM_656771.1"/>
</dbReference>
<dbReference type="SMR" id="Q5B5C1"/>
<dbReference type="STRING" id="227321.Q5B5C1"/>
<dbReference type="EnsemblFungi" id="CBF74373">
    <property type="protein sequence ID" value="CBF74373"/>
    <property type="gene ID" value="ANIA_04259"/>
</dbReference>
<dbReference type="KEGG" id="ani:ANIA_04259"/>
<dbReference type="VEuPathDB" id="FungiDB:AN4259"/>
<dbReference type="eggNOG" id="KOG2753">
    <property type="taxonomic scope" value="Eukaryota"/>
</dbReference>
<dbReference type="HOGENOM" id="CLU_035254_0_1_1"/>
<dbReference type="InParanoid" id="Q5B5C1"/>
<dbReference type="OMA" id="FNDEHKG"/>
<dbReference type="OrthoDB" id="10267031at2759"/>
<dbReference type="Proteomes" id="UP000000560">
    <property type="component" value="Chromosome II"/>
</dbReference>
<dbReference type="GO" id="GO:0016282">
    <property type="term" value="C:eukaryotic 43S preinitiation complex"/>
    <property type="evidence" value="ECO:0007669"/>
    <property type="project" value="UniProtKB-UniRule"/>
</dbReference>
<dbReference type="GO" id="GO:0033290">
    <property type="term" value="C:eukaryotic 48S preinitiation complex"/>
    <property type="evidence" value="ECO:0007669"/>
    <property type="project" value="UniProtKB-UniRule"/>
</dbReference>
<dbReference type="GO" id="GO:0005852">
    <property type="term" value="C:eukaryotic translation initiation factor 3 complex"/>
    <property type="evidence" value="ECO:0000318"/>
    <property type="project" value="GO_Central"/>
</dbReference>
<dbReference type="GO" id="GO:0071541">
    <property type="term" value="C:eukaryotic translation initiation factor 3 complex, eIF3m"/>
    <property type="evidence" value="ECO:0007669"/>
    <property type="project" value="UniProtKB-UniRule"/>
</dbReference>
<dbReference type="GO" id="GO:0003743">
    <property type="term" value="F:translation initiation factor activity"/>
    <property type="evidence" value="ECO:0007669"/>
    <property type="project" value="UniProtKB-UniRule"/>
</dbReference>
<dbReference type="GO" id="GO:0097308">
    <property type="term" value="P:cellular response to farnesol"/>
    <property type="evidence" value="ECO:0000270"/>
    <property type="project" value="AspGD"/>
</dbReference>
<dbReference type="GO" id="GO:0002183">
    <property type="term" value="P:cytoplasmic translational initiation"/>
    <property type="evidence" value="ECO:0000318"/>
    <property type="project" value="GO_Central"/>
</dbReference>
<dbReference type="GO" id="GO:0001732">
    <property type="term" value="P:formation of cytoplasmic translation initiation complex"/>
    <property type="evidence" value="ECO:0007669"/>
    <property type="project" value="UniProtKB-UniRule"/>
</dbReference>
<dbReference type="HAMAP" id="MF_03012">
    <property type="entry name" value="eIF3m"/>
    <property type="match status" value="1"/>
</dbReference>
<dbReference type="InterPro" id="IPR045237">
    <property type="entry name" value="COPS7/eIF3m"/>
</dbReference>
<dbReference type="InterPro" id="IPR027528">
    <property type="entry name" value="eIF3m"/>
</dbReference>
<dbReference type="InterPro" id="IPR040750">
    <property type="entry name" value="eIF3m_C_helix"/>
</dbReference>
<dbReference type="InterPro" id="IPR000717">
    <property type="entry name" value="PCI_dom"/>
</dbReference>
<dbReference type="PANTHER" id="PTHR15350">
    <property type="entry name" value="COP9 SIGNALOSOME COMPLEX SUBUNIT 7/DENDRITIC CELL PROTEIN GA17"/>
    <property type="match status" value="1"/>
</dbReference>
<dbReference type="PANTHER" id="PTHR15350:SF2">
    <property type="entry name" value="EUKARYOTIC TRANSLATION INITIATION FACTOR 3 SUBUNIT M"/>
    <property type="match status" value="1"/>
</dbReference>
<dbReference type="Pfam" id="PF18005">
    <property type="entry name" value="eIF3m_C_helix"/>
    <property type="match status" value="1"/>
</dbReference>
<dbReference type="Pfam" id="PF01399">
    <property type="entry name" value="PCI"/>
    <property type="match status" value="1"/>
</dbReference>
<dbReference type="SMART" id="SM00088">
    <property type="entry name" value="PINT"/>
    <property type="match status" value="1"/>
</dbReference>
<dbReference type="PROSITE" id="PS50250">
    <property type="entry name" value="PCI"/>
    <property type="match status" value="1"/>
</dbReference>
<feature type="chain" id="PRO_0000366019" description="Eukaryotic translation initiation factor 3 subunit M">
    <location>
        <begin position="1"/>
        <end position="459"/>
    </location>
</feature>
<feature type="domain" description="PCI" evidence="2">
    <location>
        <begin position="207"/>
        <end position="384"/>
    </location>
</feature>
<feature type="region of interest" description="Disordered" evidence="3">
    <location>
        <begin position="431"/>
        <end position="459"/>
    </location>
</feature>
<feature type="compositionally biased region" description="Basic and acidic residues" evidence="3">
    <location>
        <begin position="434"/>
        <end position="452"/>
    </location>
</feature>
<evidence type="ECO:0000255" key="1">
    <source>
        <dbReference type="HAMAP-Rule" id="MF_03012"/>
    </source>
</evidence>
<evidence type="ECO:0000255" key="2">
    <source>
        <dbReference type="PROSITE-ProRule" id="PRU01185"/>
    </source>
</evidence>
<evidence type="ECO:0000256" key="3">
    <source>
        <dbReference type="SAM" id="MobiDB-lite"/>
    </source>
</evidence>